<gene>
    <name evidence="1" type="primary">leuS</name>
    <name type="ordered locus">PputW619_0627</name>
</gene>
<protein>
    <recommendedName>
        <fullName evidence="1">Leucine--tRNA ligase</fullName>
        <ecNumber evidence="1">6.1.1.4</ecNumber>
    </recommendedName>
    <alternativeName>
        <fullName evidence="1">Leucyl-tRNA synthetase</fullName>
        <shortName evidence="1">LeuRS</shortName>
    </alternativeName>
</protein>
<evidence type="ECO:0000255" key="1">
    <source>
        <dbReference type="HAMAP-Rule" id="MF_00049"/>
    </source>
</evidence>
<dbReference type="EC" id="6.1.1.4" evidence="1"/>
<dbReference type="EMBL" id="CP000949">
    <property type="protein sequence ID" value="ACA71132.1"/>
    <property type="molecule type" value="Genomic_DNA"/>
</dbReference>
<dbReference type="SMR" id="B1J150"/>
<dbReference type="STRING" id="390235.PputW619_0627"/>
<dbReference type="KEGG" id="ppw:PputW619_0627"/>
<dbReference type="eggNOG" id="COG0495">
    <property type="taxonomic scope" value="Bacteria"/>
</dbReference>
<dbReference type="HOGENOM" id="CLU_004427_0_0_6"/>
<dbReference type="OrthoDB" id="9810365at2"/>
<dbReference type="GO" id="GO:0005829">
    <property type="term" value="C:cytosol"/>
    <property type="evidence" value="ECO:0007669"/>
    <property type="project" value="TreeGrafter"/>
</dbReference>
<dbReference type="GO" id="GO:0002161">
    <property type="term" value="F:aminoacyl-tRNA deacylase activity"/>
    <property type="evidence" value="ECO:0007669"/>
    <property type="project" value="InterPro"/>
</dbReference>
<dbReference type="GO" id="GO:0005524">
    <property type="term" value="F:ATP binding"/>
    <property type="evidence" value="ECO:0007669"/>
    <property type="project" value="UniProtKB-UniRule"/>
</dbReference>
<dbReference type="GO" id="GO:0004823">
    <property type="term" value="F:leucine-tRNA ligase activity"/>
    <property type="evidence" value="ECO:0007669"/>
    <property type="project" value="UniProtKB-UniRule"/>
</dbReference>
<dbReference type="GO" id="GO:0006429">
    <property type="term" value="P:leucyl-tRNA aminoacylation"/>
    <property type="evidence" value="ECO:0007669"/>
    <property type="project" value="UniProtKB-UniRule"/>
</dbReference>
<dbReference type="CDD" id="cd07958">
    <property type="entry name" value="Anticodon_Ia_Leu_BEm"/>
    <property type="match status" value="1"/>
</dbReference>
<dbReference type="CDD" id="cd00812">
    <property type="entry name" value="LeuRS_core"/>
    <property type="match status" value="1"/>
</dbReference>
<dbReference type="FunFam" id="1.10.730.10:FF:000003">
    <property type="entry name" value="Leucine--tRNA ligase"/>
    <property type="match status" value="1"/>
</dbReference>
<dbReference type="FunFam" id="2.20.28.290:FF:000001">
    <property type="entry name" value="Leucine--tRNA ligase"/>
    <property type="match status" value="1"/>
</dbReference>
<dbReference type="FunFam" id="3.10.20.590:FF:000001">
    <property type="entry name" value="Leucine--tRNA ligase"/>
    <property type="match status" value="1"/>
</dbReference>
<dbReference type="FunFam" id="3.40.50.620:FF:000003">
    <property type="entry name" value="Leucine--tRNA ligase"/>
    <property type="match status" value="1"/>
</dbReference>
<dbReference type="FunFam" id="3.40.50.620:FF:000124">
    <property type="entry name" value="Leucine--tRNA ligase"/>
    <property type="match status" value="1"/>
</dbReference>
<dbReference type="FunFam" id="3.90.740.10:FF:000012">
    <property type="entry name" value="Leucine--tRNA ligase"/>
    <property type="match status" value="1"/>
</dbReference>
<dbReference type="Gene3D" id="2.20.28.290">
    <property type="match status" value="1"/>
</dbReference>
<dbReference type="Gene3D" id="3.10.20.590">
    <property type="match status" value="1"/>
</dbReference>
<dbReference type="Gene3D" id="3.40.50.620">
    <property type="entry name" value="HUPs"/>
    <property type="match status" value="2"/>
</dbReference>
<dbReference type="Gene3D" id="1.10.730.10">
    <property type="entry name" value="Isoleucyl-tRNA Synthetase, Domain 1"/>
    <property type="match status" value="1"/>
</dbReference>
<dbReference type="HAMAP" id="MF_00049_B">
    <property type="entry name" value="Leu_tRNA_synth_B"/>
    <property type="match status" value="1"/>
</dbReference>
<dbReference type="InterPro" id="IPR001412">
    <property type="entry name" value="aa-tRNA-synth_I_CS"/>
</dbReference>
<dbReference type="InterPro" id="IPR002300">
    <property type="entry name" value="aa-tRNA-synth_Ia"/>
</dbReference>
<dbReference type="InterPro" id="IPR002302">
    <property type="entry name" value="Leu-tRNA-ligase"/>
</dbReference>
<dbReference type="InterPro" id="IPR025709">
    <property type="entry name" value="Leu_tRNA-synth_edit"/>
</dbReference>
<dbReference type="InterPro" id="IPR013155">
    <property type="entry name" value="M/V/L/I-tRNA-synth_anticd-bd"/>
</dbReference>
<dbReference type="InterPro" id="IPR015413">
    <property type="entry name" value="Methionyl/Leucyl_tRNA_Synth"/>
</dbReference>
<dbReference type="InterPro" id="IPR014729">
    <property type="entry name" value="Rossmann-like_a/b/a_fold"/>
</dbReference>
<dbReference type="InterPro" id="IPR009080">
    <property type="entry name" value="tRNAsynth_Ia_anticodon-bd"/>
</dbReference>
<dbReference type="InterPro" id="IPR009008">
    <property type="entry name" value="Val/Leu/Ile-tRNA-synth_edit"/>
</dbReference>
<dbReference type="NCBIfam" id="TIGR00396">
    <property type="entry name" value="leuS_bact"/>
    <property type="match status" value="1"/>
</dbReference>
<dbReference type="PANTHER" id="PTHR43740:SF2">
    <property type="entry name" value="LEUCINE--TRNA LIGASE, MITOCHONDRIAL"/>
    <property type="match status" value="1"/>
</dbReference>
<dbReference type="PANTHER" id="PTHR43740">
    <property type="entry name" value="LEUCYL-TRNA SYNTHETASE"/>
    <property type="match status" value="1"/>
</dbReference>
<dbReference type="Pfam" id="PF08264">
    <property type="entry name" value="Anticodon_1"/>
    <property type="match status" value="1"/>
</dbReference>
<dbReference type="Pfam" id="PF00133">
    <property type="entry name" value="tRNA-synt_1"/>
    <property type="match status" value="2"/>
</dbReference>
<dbReference type="Pfam" id="PF13603">
    <property type="entry name" value="tRNA-synt_1_2"/>
    <property type="match status" value="1"/>
</dbReference>
<dbReference type="Pfam" id="PF09334">
    <property type="entry name" value="tRNA-synt_1g"/>
    <property type="match status" value="1"/>
</dbReference>
<dbReference type="PRINTS" id="PR00985">
    <property type="entry name" value="TRNASYNTHLEU"/>
</dbReference>
<dbReference type="SUPFAM" id="SSF47323">
    <property type="entry name" value="Anticodon-binding domain of a subclass of class I aminoacyl-tRNA synthetases"/>
    <property type="match status" value="1"/>
</dbReference>
<dbReference type="SUPFAM" id="SSF52374">
    <property type="entry name" value="Nucleotidylyl transferase"/>
    <property type="match status" value="1"/>
</dbReference>
<dbReference type="SUPFAM" id="SSF50677">
    <property type="entry name" value="ValRS/IleRS/LeuRS editing domain"/>
    <property type="match status" value="1"/>
</dbReference>
<dbReference type="PROSITE" id="PS00178">
    <property type="entry name" value="AA_TRNA_LIGASE_I"/>
    <property type="match status" value="1"/>
</dbReference>
<comment type="catalytic activity">
    <reaction evidence="1">
        <text>tRNA(Leu) + L-leucine + ATP = L-leucyl-tRNA(Leu) + AMP + diphosphate</text>
        <dbReference type="Rhea" id="RHEA:11688"/>
        <dbReference type="Rhea" id="RHEA-COMP:9613"/>
        <dbReference type="Rhea" id="RHEA-COMP:9622"/>
        <dbReference type="ChEBI" id="CHEBI:30616"/>
        <dbReference type="ChEBI" id="CHEBI:33019"/>
        <dbReference type="ChEBI" id="CHEBI:57427"/>
        <dbReference type="ChEBI" id="CHEBI:78442"/>
        <dbReference type="ChEBI" id="CHEBI:78494"/>
        <dbReference type="ChEBI" id="CHEBI:456215"/>
        <dbReference type="EC" id="6.1.1.4"/>
    </reaction>
</comment>
<comment type="subcellular location">
    <subcellularLocation>
        <location evidence="1">Cytoplasm</location>
    </subcellularLocation>
</comment>
<comment type="similarity">
    <text evidence="1">Belongs to the class-I aminoacyl-tRNA synthetase family.</text>
</comment>
<proteinExistence type="inferred from homology"/>
<keyword id="KW-0030">Aminoacyl-tRNA synthetase</keyword>
<keyword id="KW-0067">ATP-binding</keyword>
<keyword id="KW-0963">Cytoplasm</keyword>
<keyword id="KW-0436">Ligase</keyword>
<keyword id="KW-0547">Nucleotide-binding</keyword>
<keyword id="KW-0648">Protein biosynthesis</keyword>
<name>SYL_PSEPW</name>
<accession>B1J150</accession>
<reference key="1">
    <citation type="submission" date="2008-02" db="EMBL/GenBank/DDBJ databases">
        <title>Complete sequence of Pseudomonas putida W619.</title>
        <authorList>
            <person name="Copeland A."/>
            <person name="Lucas S."/>
            <person name="Lapidus A."/>
            <person name="Barry K."/>
            <person name="Detter J.C."/>
            <person name="Glavina del Rio T."/>
            <person name="Dalin E."/>
            <person name="Tice H."/>
            <person name="Pitluck S."/>
            <person name="Chain P."/>
            <person name="Malfatti S."/>
            <person name="Shin M."/>
            <person name="Vergez L."/>
            <person name="Schmutz J."/>
            <person name="Larimer F."/>
            <person name="Land M."/>
            <person name="Hauser L."/>
            <person name="Kyrpides N."/>
            <person name="Kim E."/>
            <person name="Taghavi S."/>
            <person name="Vangronsveld D."/>
            <person name="van der Lelie D."/>
            <person name="Richardson P."/>
        </authorList>
    </citation>
    <scope>NUCLEOTIDE SEQUENCE [LARGE SCALE GENOMIC DNA]</scope>
    <source>
        <strain>W619</strain>
    </source>
</reference>
<feature type="chain" id="PRO_1000091348" description="Leucine--tRNA ligase">
    <location>
        <begin position="1"/>
        <end position="868"/>
    </location>
</feature>
<feature type="short sequence motif" description="'HIGH' region">
    <location>
        <begin position="42"/>
        <end position="52"/>
    </location>
</feature>
<feature type="short sequence motif" description="'KMSKS' region">
    <location>
        <begin position="627"/>
        <end position="631"/>
    </location>
</feature>
<feature type="binding site" evidence="1">
    <location>
        <position position="630"/>
    </location>
    <ligand>
        <name>ATP</name>
        <dbReference type="ChEBI" id="CHEBI:30616"/>
    </ligand>
</feature>
<sequence length="868" mass="97014">MHEQYTPRDIEAAAQHFWDEQQSFAVTEQPGKDTYYCLSMFPYPSGKLHMGHVRNYTIGDVIARYQRMLGKNVLQPMGWDAFGMPAENAAMKNNVAPAKWTYENIDYMKTQLKSLGLAIDWAREVTTCKPDYYRWEQWLFTRLFEKGIIYRKNGTVNWDPADQTVLANEQVIDGRGWRSGALIEKREIPMYYFRITDYADELLESLDELPGWPEQVKTMQRNWIGKSRGMEVQFPYDQASIGHEGTLKVFTTRPDTLMGATYVAVAAEHPLATQAAQGNPALQAFIDECKSGSVAEADMATQEKKGMPTSLLVEHPLTGEKLPVWVANYVLMHYGDGAVMAVPAHDERDFEFAHKYNLPVKAVVRTSAGDEVGSEWQAAYGEHGQLINSGEFDGLDFAGAFDAIEAALIRKELGKSRTQFRLRDWGISRQRYWGCPIPIIHCPSCGDVPVPEDQLPVTLPENVVPDGAGSPLARMPEFYECSCPKCGAAAKRETDTMDTFVESSWYFARYASPNYDKGLVDPKAANHWLPVDQYIGGIEHAILHLLYARFFHKLMRDEGLVTSNEPFKNLLTQGMVVAETYYRVASNGGKDWFNPADVEIERDAKAKIIGARLKTDGLPVEIGGTEKMSKSKNNGVDPQSMIEAYGADTCRLFMMFASPPDMSLEWSDSGVEGASRFLRRVWRLAQGHVNQGLPGKLDLAALNDEQKVIRRAIHTAIKQASTDVGQYHKFNTAIAQVMTVMNVLEKAPQSTEQDRALLQEGLEAVTLLLAPITPHISHELWKALGHEQAVIDACWPVVDESALVQDTVTLVVQVNGKLRGQVEMPAAASREEIEAAARNNENVLRFIDGLTIRKVIVVPGKLVNIVAN</sequence>
<organism>
    <name type="scientific">Pseudomonas putida (strain W619)</name>
    <dbReference type="NCBI Taxonomy" id="390235"/>
    <lineage>
        <taxon>Bacteria</taxon>
        <taxon>Pseudomonadati</taxon>
        <taxon>Pseudomonadota</taxon>
        <taxon>Gammaproteobacteria</taxon>
        <taxon>Pseudomonadales</taxon>
        <taxon>Pseudomonadaceae</taxon>
        <taxon>Pseudomonas</taxon>
    </lineage>
</organism>